<comment type="function">
    <text evidence="2">Catalyzes the hydrolysis of membrane sphingomyelin to form phosphorylcholine and ceramide.</text>
</comment>
<comment type="catalytic activity">
    <reaction evidence="5">
        <text>a sphingomyelin + H2O = phosphocholine + an N-acylsphing-4-enine + H(+)</text>
        <dbReference type="Rhea" id="RHEA:19253"/>
        <dbReference type="ChEBI" id="CHEBI:15377"/>
        <dbReference type="ChEBI" id="CHEBI:15378"/>
        <dbReference type="ChEBI" id="CHEBI:17636"/>
        <dbReference type="ChEBI" id="CHEBI:52639"/>
        <dbReference type="ChEBI" id="CHEBI:295975"/>
        <dbReference type="EC" id="3.1.4.12"/>
    </reaction>
    <physiologicalReaction direction="left-to-right" evidence="7">
        <dbReference type="Rhea" id="RHEA:19254"/>
    </physiologicalReaction>
</comment>
<comment type="catalytic activity">
    <reaction evidence="5">
        <text>N-(hexadecanoyl)-sphing-4-enine-1-phosphocholine + H2O = N-hexadecanoylsphing-4-enine + phosphocholine + H(+)</text>
        <dbReference type="Rhea" id="RHEA:45644"/>
        <dbReference type="ChEBI" id="CHEBI:15377"/>
        <dbReference type="ChEBI" id="CHEBI:15378"/>
        <dbReference type="ChEBI" id="CHEBI:72959"/>
        <dbReference type="ChEBI" id="CHEBI:78646"/>
        <dbReference type="ChEBI" id="CHEBI:295975"/>
    </reaction>
    <physiologicalReaction direction="left-to-right" evidence="7">
        <dbReference type="Rhea" id="RHEA:45645"/>
    </physiologicalReaction>
</comment>
<comment type="cofactor">
    <cofactor evidence="5">
        <name>Mg(2+)</name>
        <dbReference type="ChEBI" id="CHEBI:18420"/>
    </cofactor>
    <cofactor evidence="5">
        <name>Mn(2+)</name>
        <dbReference type="ChEBI" id="CHEBI:29035"/>
    </cofactor>
</comment>
<comment type="activity regulation">
    <text evidence="5">Activated by anionic phospholipids, specially cardiolipin and phosphatidylserine.</text>
</comment>
<comment type="biophysicochemical properties">
    <phDependence>
        <text evidence="5">Optimum pH is 7.5.</text>
    </phDependence>
</comment>
<comment type="pathway">
    <text evidence="5">Lipid metabolism; sphingolipid metabolism.</text>
</comment>
<comment type="subcellular location">
    <subcellularLocation>
        <location evidence="5">Mitochondrion inner membrane</location>
        <topology evidence="2">Single-pass type II membrane protein</topology>
        <orientation evidence="2">Intermembrane side</orientation>
    </subcellularLocation>
    <subcellularLocation>
        <location evidence="5">Endoplasmic reticulum membrane</location>
        <topology evidence="3">Single-pass membrane protein</topology>
    </subcellularLocation>
</comment>
<comment type="tissue specificity">
    <text evidence="5">Highly expressed in testis, pancreas, epididymis, and brain.</text>
</comment>
<comment type="similarity">
    <text evidence="6">Belongs to the neutral sphingomyelinase family.</text>
</comment>
<protein>
    <recommendedName>
        <fullName>Sphingomyelin phosphodiesterase 5</fullName>
        <ecNumber evidence="5">3.1.4.12</ecNumber>
    </recommendedName>
    <alternativeName>
        <fullName>Mitochondrial neutral sphingomyelinase</fullName>
        <shortName>mtnSMase</shortName>
    </alternativeName>
</protein>
<accession>D6MZJ6</accession>
<keyword id="KW-0256">Endoplasmic reticulum</keyword>
<keyword id="KW-0378">Hydrolase</keyword>
<keyword id="KW-0443">Lipid metabolism</keyword>
<keyword id="KW-0460">Magnesium</keyword>
<keyword id="KW-0472">Membrane</keyword>
<keyword id="KW-0479">Metal-binding</keyword>
<keyword id="KW-0496">Mitochondrion</keyword>
<keyword id="KW-0999">Mitochondrion inner membrane</keyword>
<keyword id="KW-1185">Reference proteome</keyword>
<keyword id="KW-0735">Signal-anchor</keyword>
<keyword id="KW-0746">Sphingolipid metabolism</keyword>
<keyword id="KW-0809">Transit peptide</keyword>
<keyword id="KW-0812">Transmembrane</keyword>
<keyword id="KW-1133">Transmembrane helix</keyword>
<reference evidence="8" key="1">
    <citation type="journal article" date="2010" name="J. Biol. Chem.">
        <title>Identification and characterization of murine mitochondria-associated neutral sphingomyelinase (MA-nSMase), the mammalian sphingomyelin phosphodiesterase 5.</title>
        <authorList>
            <person name="Wu B.X."/>
            <person name="Rajagopalan V."/>
            <person name="Roddy P.L."/>
            <person name="Clarke C.J."/>
            <person name="Hannun Y.A."/>
        </authorList>
    </citation>
    <scope>NUCLEOTIDE SEQUENCE [MRNA]</scope>
    <scope>CATALYTIC ACTIVITY</scope>
    <scope>FUNCTION</scope>
    <scope>SUBCELLULAR LOCATION</scope>
    <scope>TISSUE SPECIFICITY</scope>
    <scope>COFACTOR</scope>
    <scope>ACTIVITY REGULATION</scope>
    <scope>BIOPHYSICOCHEMICAL PROPERTIES</scope>
    <source>
        <strain evidence="8">C57BL/6J</strain>
    </source>
</reference>
<reference evidence="10" key="2">
    <citation type="journal article" date="2009" name="PLoS Biol.">
        <title>Lineage-specific biology revealed by a finished genome assembly of the mouse.</title>
        <authorList>
            <person name="Church D.M."/>
            <person name="Goodstadt L."/>
            <person name="Hillier L.W."/>
            <person name="Zody M.C."/>
            <person name="Goldstein S."/>
            <person name="She X."/>
            <person name="Bult C.J."/>
            <person name="Agarwala R."/>
            <person name="Cherry J.L."/>
            <person name="DiCuccio M."/>
            <person name="Hlavina W."/>
            <person name="Kapustin Y."/>
            <person name="Meric P."/>
            <person name="Maglott D."/>
            <person name="Birtle Z."/>
            <person name="Marques A.C."/>
            <person name="Graves T."/>
            <person name="Zhou S."/>
            <person name="Teague B."/>
            <person name="Potamousis K."/>
            <person name="Churas C."/>
            <person name="Place M."/>
            <person name="Herschleb J."/>
            <person name="Runnheim R."/>
            <person name="Forrest D."/>
            <person name="Amos-Landgraf J."/>
            <person name="Schwartz D.C."/>
            <person name="Cheng Z."/>
            <person name="Lindblad-Toh K."/>
            <person name="Eichler E.E."/>
            <person name="Ponting C.P."/>
        </authorList>
    </citation>
    <scope>NUCLEOTIDE SEQUENCE [LARGE SCALE GENOMIC DNA]</scope>
    <source>
        <strain evidence="10">C57BL/6J</strain>
    </source>
</reference>
<evidence type="ECO:0000250" key="1"/>
<evidence type="ECO:0000250" key="2">
    <source>
        <dbReference type="UniProtKB" id="F1QG30"/>
    </source>
</evidence>
<evidence type="ECO:0000255" key="3"/>
<evidence type="ECO:0000256" key="4">
    <source>
        <dbReference type="SAM" id="MobiDB-lite"/>
    </source>
</evidence>
<evidence type="ECO:0000269" key="5">
    <source>
    </source>
</evidence>
<evidence type="ECO:0000305" key="6"/>
<evidence type="ECO:0000305" key="7">
    <source>
    </source>
</evidence>
<evidence type="ECO:0000312" key="8">
    <source>
        <dbReference type="EMBL" id="ADG03437.1"/>
    </source>
</evidence>
<evidence type="ECO:0000312" key="9">
    <source>
        <dbReference type="MGI" id="MGI:3709877"/>
    </source>
</evidence>
<evidence type="ECO:0000312" key="10">
    <source>
        <dbReference type="Proteomes" id="UP000000589"/>
    </source>
</evidence>
<organism evidence="8">
    <name type="scientific">Mus musculus</name>
    <name type="common">Mouse</name>
    <dbReference type="NCBI Taxonomy" id="10090"/>
    <lineage>
        <taxon>Eukaryota</taxon>
        <taxon>Metazoa</taxon>
        <taxon>Chordata</taxon>
        <taxon>Craniata</taxon>
        <taxon>Vertebrata</taxon>
        <taxon>Euteleostomi</taxon>
        <taxon>Mammalia</taxon>
        <taxon>Eutheria</taxon>
        <taxon>Euarchontoglires</taxon>
        <taxon>Glires</taxon>
        <taxon>Rodentia</taxon>
        <taxon>Myomorpha</taxon>
        <taxon>Muroidea</taxon>
        <taxon>Muridae</taxon>
        <taxon>Murinae</taxon>
        <taxon>Mus</taxon>
        <taxon>Mus</taxon>
    </lineage>
</organism>
<feature type="chain" id="PRO_0000451401" description="Sphingomyelin phosphodiesterase 5">
    <location>
        <begin position="1"/>
        <end position="483"/>
    </location>
</feature>
<feature type="transmembrane region" description="Helical" evidence="3">
    <location>
        <begin position="80"/>
        <end position="100"/>
    </location>
</feature>
<feature type="region of interest" description="Disordered" evidence="4">
    <location>
        <begin position="1"/>
        <end position="20"/>
    </location>
</feature>
<feature type="active site" description="Proton acceptor" evidence="2">
    <location>
        <position position="471"/>
    </location>
</feature>
<feature type="binding site" evidence="1">
    <location>
        <position position="209"/>
    </location>
    <ligand>
        <name>Mg(2+)</name>
        <dbReference type="ChEBI" id="CHEBI:18420"/>
    </ligand>
</feature>
<feature type="site" description="Important for substrate recognition" evidence="1">
    <location>
        <position position="351"/>
    </location>
</feature>
<gene>
    <name evidence="9" type="primary">Smpd5</name>
    <name evidence="9" type="synonym">Gm10345</name>
</gene>
<proteinExistence type="evidence at protein level"/>
<sequence length="483" mass="53869">MSLPDISRRRSPVPQEDWPLTPNALRPSPFPNPVLQALYSLSRVLLFPTYWSLDQLLGCWAPSVRSKSLGWFKVLAGSGVLLPLVVVGLPLALVGLALWLPLQVWRRPFCYQPPPACWVWPQPWHPPAERRRCFVFLTANLCLLPHGLAHFNNLSHSLQRAEAVGAALLDSLQSSQYRVSECSQPPPRVPGGELKATLPMGLDFVCLQEVFDLRAARRLVRVLVPNLGPVIYDVGTFGLMAGPYIKVLGSGLLLASRYPLLRATFRCFPNARREDAMASKGLLSVQAQLGIVDGHPIVGYLHCTHLHAPVEDGHIRCKQLTLLLEWVEEFEAENRQSDEAVAFSVLLGDLNFDNCSQDHAKEQGHKLFSCFQDPCRLGVCQEQPWALGTILNSSMLRHSIACSPEMLRRALRQEKGRRLYLSGPLHGSYPAQSWKGRRLDYITYRRVPGSRLSPEAEQVTFSTAFAGLTDHLAMGLKLQVVCS</sequence>
<dbReference type="EC" id="3.1.4.12" evidence="5"/>
<dbReference type="EMBL" id="GU144514">
    <property type="protein sequence ID" value="ADG03437.1"/>
    <property type="molecule type" value="mRNA"/>
</dbReference>
<dbReference type="EMBL" id="AC155074">
    <property type="status" value="NOT_ANNOTATED_CDS"/>
    <property type="molecule type" value="Genomic_DNA"/>
</dbReference>
<dbReference type="CCDS" id="CCDS56988.1"/>
<dbReference type="RefSeq" id="NP_001182466.1">
    <property type="nucleotide sequence ID" value="NM_001195537.2"/>
</dbReference>
<dbReference type="SMR" id="D6MZJ6"/>
<dbReference type="FunCoup" id="D6MZJ6">
    <property type="interactions" value="26"/>
</dbReference>
<dbReference type="STRING" id="10090.ENSMUSP00000134687"/>
<dbReference type="SwissLipids" id="SLP:000001137"/>
<dbReference type="SwissPalm" id="D6MZJ6"/>
<dbReference type="PaxDb" id="10090-ENSMUSP00000134687"/>
<dbReference type="ProteomicsDB" id="337062"/>
<dbReference type="Ensembl" id="ENSMUST00000163991.4">
    <property type="protein sequence ID" value="ENSMUSP00000134687.2"/>
    <property type="gene ID" value="ENSMUSG00000071724.6"/>
</dbReference>
<dbReference type="GeneID" id="100503915"/>
<dbReference type="KEGG" id="mmu:100503915"/>
<dbReference type="UCSC" id="uc011zut.1">
    <property type="organism name" value="mouse"/>
</dbReference>
<dbReference type="AGR" id="MGI:3709877"/>
<dbReference type="CTD" id="392275"/>
<dbReference type="MGI" id="MGI:3709877">
    <property type="gene designation" value="Smpd5"/>
</dbReference>
<dbReference type="VEuPathDB" id="HostDB:ENSMUSG00000071724"/>
<dbReference type="eggNOG" id="ENOG502QVRH">
    <property type="taxonomic scope" value="Eukaryota"/>
</dbReference>
<dbReference type="GeneTree" id="ENSGT00400000022168"/>
<dbReference type="HOGENOM" id="CLU_028243_0_0_1"/>
<dbReference type="InParanoid" id="D6MZJ6"/>
<dbReference type="OMA" id="LGCWAPA"/>
<dbReference type="OrthoDB" id="40902at2759"/>
<dbReference type="PhylomeDB" id="D6MZJ6"/>
<dbReference type="TreeFam" id="TF328678"/>
<dbReference type="BRENDA" id="3.1.4.12">
    <property type="organism ID" value="3474"/>
</dbReference>
<dbReference type="UniPathway" id="UPA00222"/>
<dbReference type="BioGRID-ORCS" id="100503915">
    <property type="hits" value="2 hits in 77 CRISPR screens"/>
</dbReference>
<dbReference type="PRO" id="PR:D6MZJ6"/>
<dbReference type="Proteomes" id="UP000000589">
    <property type="component" value="Chromosome 15"/>
</dbReference>
<dbReference type="RNAct" id="D6MZJ6">
    <property type="molecule type" value="protein"/>
</dbReference>
<dbReference type="Bgee" id="ENSMUSG00000071724">
    <property type="expression patterns" value="Expressed in spermatocyte and 63 other cell types or tissues"/>
</dbReference>
<dbReference type="ExpressionAtlas" id="D6MZJ6">
    <property type="expression patterns" value="baseline and differential"/>
</dbReference>
<dbReference type="GO" id="GO:0005789">
    <property type="term" value="C:endoplasmic reticulum membrane"/>
    <property type="evidence" value="ECO:0000314"/>
    <property type="project" value="UniProtKB"/>
</dbReference>
<dbReference type="GO" id="GO:0005576">
    <property type="term" value="C:extracellular region"/>
    <property type="evidence" value="ECO:0007669"/>
    <property type="project" value="InterPro"/>
</dbReference>
<dbReference type="GO" id="GO:0005743">
    <property type="term" value="C:mitochondrial inner membrane"/>
    <property type="evidence" value="ECO:0007669"/>
    <property type="project" value="UniProtKB-SubCell"/>
</dbReference>
<dbReference type="GO" id="GO:0031966">
    <property type="term" value="C:mitochondrial membrane"/>
    <property type="evidence" value="ECO:0000314"/>
    <property type="project" value="UniProtKB"/>
</dbReference>
<dbReference type="GO" id="GO:0005739">
    <property type="term" value="C:mitochondrion"/>
    <property type="evidence" value="ECO:0000314"/>
    <property type="project" value="MGI"/>
</dbReference>
<dbReference type="GO" id="GO:0046872">
    <property type="term" value="F:metal ion binding"/>
    <property type="evidence" value="ECO:0007669"/>
    <property type="project" value="UniProtKB-KW"/>
</dbReference>
<dbReference type="GO" id="GO:0004767">
    <property type="term" value="F:sphingomyelin phosphodiesterase activity"/>
    <property type="evidence" value="ECO:0000314"/>
    <property type="project" value="UniProtKB"/>
</dbReference>
<dbReference type="GO" id="GO:0046513">
    <property type="term" value="P:ceramide biosynthetic process"/>
    <property type="evidence" value="ECO:0000314"/>
    <property type="project" value="UniProtKB"/>
</dbReference>
<dbReference type="GO" id="GO:0006672">
    <property type="term" value="P:ceramide metabolic process"/>
    <property type="evidence" value="ECO:0000314"/>
    <property type="project" value="MGI"/>
</dbReference>
<dbReference type="GO" id="GO:0006685">
    <property type="term" value="P:sphingomyelin catabolic process"/>
    <property type="evidence" value="ECO:0000314"/>
    <property type="project" value="UniProtKB"/>
</dbReference>
<dbReference type="CDD" id="cd09078">
    <property type="entry name" value="nSMase"/>
    <property type="match status" value="1"/>
</dbReference>
<dbReference type="Gene3D" id="3.60.10.10">
    <property type="entry name" value="Endonuclease/exonuclease/phosphatase"/>
    <property type="match status" value="1"/>
</dbReference>
<dbReference type="InterPro" id="IPR036691">
    <property type="entry name" value="Endo/exonu/phosph_ase_sf"/>
</dbReference>
<dbReference type="InterPro" id="IPR038772">
    <property type="entry name" value="Sph/SMPD2-like"/>
</dbReference>
<dbReference type="InterPro" id="IPR017766">
    <property type="entry name" value="Sphingomyelinase/PLipase_C"/>
</dbReference>
<dbReference type="PANTHER" id="PTHR16320:SF9">
    <property type="entry name" value="SPHINGOMYELIN PHOSPHODIESTERASE 5"/>
    <property type="match status" value="1"/>
</dbReference>
<dbReference type="PANTHER" id="PTHR16320">
    <property type="entry name" value="SPHINGOMYELINASE FAMILY MEMBER"/>
    <property type="match status" value="1"/>
</dbReference>
<dbReference type="SUPFAM" id="SSF56219">
    <property type="entry name" value="DNase I-like"/>
    <property type="match status" value="1"/>
</dbReference>
<name>NSMA5_MOUSE</name>